<proteinExistence type="predicted"/>
<evidence type="ECO:0000269" key="1">
    <source>
    </source>
</evidence>
<evidence type="ECO:0000303" key="2">
    <source>
    </source>
</evidence>
<evidence type="ECO:0000312" key="3">
    <source>
        <dbReference type="EMBL" id="AEZ43440.1"/>
    </source>
</evidence>
<protein>
    <recommendedName>
        <fullName evidence="2">Kiwa protein KwaB</fullName>
    </recommendedName>
</protein>
<dbReference type="EMBL" id="CP003109">
    <property type="protein sequence ID" value="AEZ43440.1"/>
    <property type="molecule type" value="Genomic_DNA"/>
</dbReference>
<dbReference type="RefSeq" id="WP_000211629.1">
    <property type="nucleotide sequence ID" value="NC_017656.1"/>
</dbReference>
<dbReference type="KEGG" id="elr:ECO55CA74_24530"/>
<dbReference type="GO" id="GO:0051607">
    <property type="term" value="P:defense response to virus"/>
    <property type="evidence" value="ECO:0007669"/>
    <property type="project" value="UniProtKB-KW"/>
</dbReference>
<dbReference type="InterPro" id="IPR048119">
    <property type="entry name" value="KwaB"/>
</dbReference>
<dbReference type="InterPro" id="IPR032359">
    <property type="entry name" value="KwaB-like"/>
</dbReference>
<dbReference type="NCBIfam" id="NF041623">
    <property type="entry name" value="KwaB"/>
    <property type="match status" value="1"/>
</dbReference>
<dbReference type="Pfam" id="PF16162">
    <property type="entry name" value="KwaB"/>
    <property type="match status" value="1"/>
</dbReference>
<feature type="chain" id="PRO_0000456373" description="Kiwa protein KwaB">
    <location>
        <begin position="1"/>
        <end position="315"/>
    </location>
</feature>
<accession>P0DW46</accession>
<organism>
    <name type="scientific">Escherichia coli O55:H7 (strain RM12579 / EPEC)</name>
    <dbReference type="NCBI Taxonomy" id="1048689"/>
    <lineage>
        <taxon>Bacteria</taxon>
        <taxon>Pseudomonadati</taxon>
        <taxon>Pseudomonadota</taxon>
        <taxon>Gammaproteobacteria</taxon>
        <taxon>Enterobacterales</taxon>
        <taxon>Enterobacteriaceae</taxon>
        <taxon>Escherichia</taxon>
    </lineage>
</organism>
<name>KWAB_ECORM</name>
<keyword id="KW-0051">Antiviral defense</keyword>
<reference key="1">
    <citation type="journal article" date="2012" name="J. Bacteriol.">
        <title>Escherichia coli serotype O55:H7 diversity supports parallel acquisition of bacteriophage at Shiga toxin phage insertion sites during evolution of the O157:H7 lineage.</title>
        <authorList>
            <person name="Kyle J.L."/>
            <person name="Cummings C.A."/>
            <person name="Parker C.T."/>
            <person name="Quinones B."/>
            <person name="Vatta P."/>
            <person name="Newton E."/>
            <person name="Huynh S."/>
            <person name="Swimley M."/>
            <person name="Degoricija L."/>
            <person name="Barker M."/>
            <person name="Fontanoz S."/>
            <person name="Nguyen K."/>
            <person name="Patel R."/>
            <person name="Fang R."/>
            <person name="Tebbs R."/>
            <person name="Petrauskene O."/>
            <person name="Furtado M."/>
            <person name="Mandrell R.E."/>
        </authorList>
    </citation>
    <scope>NUCLEOTIDE SEQUENCE [LARGE SCALE GENOMIC DNA]</scope>
    <source>
        <strain>RM12579 / EPEC</strain>
    </source>
</reference>
<reference key="2">
    <citation type="journal article" date="2018" name="Science">
        <title>Systematic discovery of antiphage defense systems in the microbial pangenome.</title>
        <authorList>
            <person name="Doron S."/>
            <person name="Melamed S."/>
            <person name="Ofir G."/>
            <person name="Leavitt A."/>
            <person name="Lopatina A."/>
            <person name="Keren M."/>
            <person name="Amitai G."/>
            <person name="Sorek R."/>
        </authorList>
    </citation>
    <scope>FUNCTION</scope>
    <scope>DISRUPTION PHENOTYPE</scope>
    <scope>EXPRESSION IN E.COLI</scope>
    <source>
        <strain>RM12579 / EPEC</strain>
    </source>
</reference>
<comment type="function">
    <text evidence="1">Component of antiviral defense system Kiwa, composed of KwaA and KwaB. Expression of Kiwa in E.coli (strain MG1655) confers resistance to phages lambda and SECphi18.</text>
</comment>
<comment type="disruption phenotype">
    <text evidence="1">Cannot be deleted in a Kiwa-containing strain of E.coli.</text>
</comment>
<sequence length="315" mass="36100">MTTQQLKEKISKIIDNFSGIRVVFTTTANELKLSRIEGSALNSIAEGFIDKIKEDIINNEDLTSPLLSNFDDRKNALFKFDYEQYPEEFNKITQAIAIPPNSQDYYNPLNKFTDVKGIIILISGDNKCLALYKNKTNLAVLRNSRKMFNLVPDPDGYLKQLPNEILRLDFNYDLFSIGEDFYIKNHKTLETQMKFHQVIEAQAVIALNSLRDSLLIEDISGLEKSSREISFARKLAKISKHSPVLGKIDTKTIIDYVSQHKYLSAILQINEAGDKLLIKTKTSQKHFIKLMSDDYLQSDLTKIIYMSIAKDRLDE</sequence>
<gene>
    <name evidence="2" type="primary">kwaB</name>
    <name evidence="3" type="ORF">ECO55CA74_24530</name>
</gene>